<feature type="chain" id="PRO_0000172385" description="Large ribosomal subunit protein bL32">
    <location>
        <begin position="1"/>
        <end position="57"/>
    </location>
</feature>
<feature type="region of interest" description="Disordered" evidence="2">
    <location>
        <begin position="1"/>
        <end position="23"/>
    </location>
</feature>
<feature type="compositionally biased region" description="Basic residues" evidence="2">
    <location>
        <begin position="1"/>
        <end position="20"/>
    </location>
</feature>
<organism>
    <name type="scientific">Prochlorococcus marinus (strain SARG / CCMP1375 / SS120)</name>
    <dbReference type="NCBI Taxonomy" id="167539"/>
    <lineage>
        <taxon>Bacteria</taxon>
        <taxon>Bacillati</taxon>
        <taxon>Cyanobacteriota</taxon>
        <taxon>Cyanophyceae</taxon>
        <taxon>Synechococcales</taxon>
        <taxon>Prochlorococcaceae</taxon>
        <taxon>Prochlorococcus</taxon>
    </lineage>
</organism>
<comment type="similarity">
    <text evidence="1">Belongs to the bacterial ribosomal protein bL32 family.</text>
</comment>
<keyword id="KW-1185">Reference proteome</keyword>
<keyword id="KW-0687">Ribonucleoprotein</keyword>
<keyword id="KW-0689">Ribosomal protein</keyword>
<accession>Q7VBW1</accession>
<dbReference type="EMBL" id="AE017126">
    <property type="protein sequence ID" value="AAQ00026.1"/>
    <property type="molecule type" value="Genomic_DNA"/>
</dbReference>
<dbReference type="RefSeq" id="NP_875373.1">
    <property type="nucleotide sequence ID" value="NC_005042.1"/>
</dbReference>
<dbReference type="RefSeq" id="WP_011125133.1">
    <property type="nucleotide sequence ID" value="NC_005042.1"/>
</dbReference>
<dbReference type="SMR" id="Q7VBW1"/>
<dbReference type="STRING" id="167539.Pro_0981"/>
<dbReference type="EnsemblBacteria" id="AAQ00026">
    <property type="protein sequence ID" value="AAQ00026"/>
    <property type="gene ID" value="Pro_0981"/>
</dbReference>
<dbReference type="KEGG" id="pma:Pro_0981"/>
<dbReference type="PATRIC" id="fig|167539.5.peg.1029"/>
<dbReference type="eggNOG" id="COG0333">
    <property type="taxonomic scope" value="Bacteria"/>
</dbReference>
<dbReference type="HOGENOM" id="CLU_199882_0_0_3"/>
<dbReference type="OrthoDB" id="541730at2"/>
<dbReference type="Proteomes" id="UP000001420">
    <property type="component" value="Chromosome"/>
</dbReference>
<dbReference type="GO" id="GO:0015934">
    <property type="term" value="C:large ribosomal subunit"/>
    <property type="evidence" value="ECO:0007669"/>
    <property type="project" value="InterPro"/>
</dbReference>
<dbReference type="GO" id="GO:0003735">
    <property type="term" value="F:structural constituent of ribosome"/>
    <property type="evidence" value="ECO:0007669"/>
    <property type="project" value="InterPro"/>
</dbReference>
<dbReference type="GO" id="GO:0006412">
    <property type="term" value="P:translation"/>
    <property type="evidence" value="ECO:0007669"/>
    <property type="project" value="UniProtKB-UniRule"/>
</dbReference>
<dbReference type="Gene3D" id="1.20.5.640">
    <property type="entry name" value="Single helix bin"/>
    <property type="match status" value="1"/>
</dbReference>
<dbReference type="HAMAP" id="MF_00340">
    <property type="entry name" value="Ribosomal_bL32"/>
    <property type="match status" value="1"/>
</dbReference>
<dbReference type="InterPro" id="IPR002677">
    <property type="entry name" value="Ribosomal_bL32"/>
</dbReference>
<dbReference type="InterPro" id="IPR044958">
    <property type="entry name" value="Ribosomal_bL32_plant/cyanobact"/>
</dbReference>
<dbReference type="InterPro" id="IPR011332">
    <property type="entry name" value="Ribosomal_zn-bd"/>
</dbReference>
<dbReference type="NCBIfam" id="TIGR01031">
    <property type="entry name" value="rpmF_bact"/>
    <property type="match status" value="1"/>
</dbReference>
<dbReference type="PANTHER" id="PTHR36083">
    <property type="entry name" value="50S RIBOSOMAL PROTEIN L32, CHLOROPLASTIC"/>
    <property type="match status" value="1"/>
</dbReference>
<dbReference type="PANTHER" id="PTHR36083:SF1">
    <property type="entry name" value="LARGE RIBOSOMAL SUBUNIT PROTEIN BL32C"/>
    <property type="match status" value="1"/>
</dbReference>
<dbReference type="Pfam" id="PF01783">
    <property type="entry name" value="Ribosomal_L32p"/>
    <property type="match status" value="1"/>
</dbReference>
<dbReference type="SUPFAM" id="SSF57829">
    <property type="entry name" value="Zn-binding ribosomal proteins"/>
    <property type="match status" value="1"/>
</dbReference>
<sequence>MAVPKKKTSKGKRNQRHAVWKAKAGDAAQKALSLGKSILSGRAQGFVYPIQEEDSEE</sequence>
<proteinExistence type="inferred from homology"/>
<gene>
    <name evidence="1" type="primary">rpmF</name>
    <name evidence="1" type="synonym">rpl32</name>
    <name type="ordered locus">Pro_0981</name>
</gene>
<name>RL32_PROMA</name>
<protein>
    <recommendedName>
        <fullName evidence="1">Large ribosomal subunit protein bL32</fullName>
    </recommendedName>
    <alternativeName>
        <fullName evidence="3">50S ribosomal protein L32</fullName>
    </alternativeName>
</protein>
<evidence type="ECO:0000255" key="1">
    <source>
        <dbReference type="HAMAP-Rule" id="MF_00340"/>
    </source>
</evidence>
<evidence type="ECO:0000256" key="2">
    <source>
        <dbReference type="SAM" id="MobiDB-lite"/>
    </source>
</evidence>
<evidence type="ECO:0000305" key="3"/>
<reference key="1">
    <citation type="journal article" date="2003" name="Proc. Natl. Acad. Sci. U.S.A.">
        <title>Genome sequence of the cyanobacterium Prochlorococcus marinus SS120, a nearly minimal oxyphototrophic genome.</title>
        <authorList>
            <person name="Dufresne A."/>
            <person name="Salanoubat M."/>
            <person name="Partensky F."/>
            <person name="Artiguenave F."/>
            <person name="Axmann I.M."/>
            <person name="Barbe V."/>
            <person name="Duprat S."/>
            <person name="Galperin M.Y."/>
            <person name="Koonin E.V."/>
            <person name="Le Gall F."/>
            <person name="Makarova K.S."/>
            <person name="Ostrowski M."/>
            <person name="Oztas S."/>
            <person name="Robert C."/>
            <person name="Rogozin I.B."/>
            <person name="Scanlan D.J."/>
            <person name="Tandeau de Marsac N."/>
            <person name="Weissenbach J."/>
            <person name="Wincker P."/>
            <person name="Wolf Y.I."/>
            <person name="Hess W.R."/>
        </authorList>
    </citation>
    <scope>NUCLEOTIDE SEQUENCE [LARGE SCALE GENOMIC DNA]</scope>
    <source>
        <strain>SARG / CCMP1375 / SS120</strain>
    </source>
</reference>